<sequence>MAIVKCKPTSAGRRHVVKIVNPELHKGKPYAPLLDTKSKTGGRNNFGRITTRHIGGGHKQHYRLIDFKRNKLDIPAVVERLEYDPNRSANIALVLYKDGERRYILAPKGLSAGDTIQSGANAPIKVGNALPMRNIPVGSTVHNVELKPGKGGQIARSAGAYVQIIAREGNYVTLRLRSGEMRKVLAECTATIGEVGNSEHMLRVLGKAGANRWRGIRPTVRGTAMNPVDHPHGGGEGRNFGKHPVTPWGVQTKGKKTRHNKRTDKFIVRRRGK</sequence>
<protein>
    <recommendedName>
        <fullName evidence="1">Large ribosomal subunit protein uL2</fullName>
    </recommendedName>
    <alternativeName>
        <fullName evidence="3">50S ribosomal protein L2</fullName>
    </alternativeName>
</protein>
<accession>Q9CL35</accession>
<comment type="function">
    <text evidence="1">One of the primary rRNA binding proteins. Required for association of the 30S and 50S subunits to form the 70S ribosome, for tRNA binding and peptide bond formation. It has been suggested to have peptidyltransferase activity; this is somewhat controversial. Makes several contacts with the 16S rRNA in the 70S ribosome.</text>
</comment>
<comment type="subunit">
    <text evidence="1">Part of the 50S ribosomal subunit. Forms a bridge to the 30S subunit in the 70S ribosome.</text>
</comment>
<comment type="similarity">
    <text evidence="1">Belongs to the universal ribosomal protein uL2 family.</text>
</comment>
<keyword id="KW-1185">Reference proteome</keyword>
<keyword id="KW-0687">Ribonucleoprotein</keyword>
<keyword id="KW-0689">Ribosomal protein</keyword>
<keyword id="KW-0694">RNA-binding</keyword>
<keyword id="KW-0699">rRNA-binding</keyword>
<proteinExistence type="inferred from homology"/>
<dbReference type="EMBL" id="AE004439">
    <property type="protein sequence ID" value="AAK03496.1"/>
    <property type="molecule type" value="Genomic_DNA"/>
</dbReference>
<dbReference type="RefSeq" id="WP_005724028.1">
    <property type="nucleotide sequence ID" value="NC_002663.1"/>
</dbReference>
<dbReference type="SMR" id="Q9CL35"/>
<dbReference type="STRING" id="272843.PM1412"/>
<dbReference type="EnsemblBacteria" id="AAK03496">
    <property type="protein sequence ID" value="AAK03496"/>
    <property type="gene ID" value="PM1412"/>
</dbReference>
<dbReference type="GeneID" id="77207029"/>
<dbReference type="KEGG" id="pmu:PM1412"/>
<dbReference type="HOGENOM" id="CLU_036235_2_1_6"/>
<dbReference type="OrthoDB" id="9778722at2"/>
<dbReference type="Proteomes" id="UP000000809">
    <property type="component" value="Chromosome"/>
</dbReference>
<dbReference type="GO" id="GO:0015934">
    <property type="term" value="C:large ribosomal subunit"/>
    <property type="evidence" value="ECO:0007669"/>
    <property type="project" value="InterPro"/>
</dbReference>
<dbReference type="GO" id="GO:0019843">
    <property type="term" value="F:rRNA binding"/>
    <property type="evidence" value="ECO:0007669"/>
    <property type="project" value="UniProtKB-UniRule"/>
</dbReference>
<dbReference type="GO" id="GO:0003735">
    <property type="term" value="F:structural constituent of ribosome"/>
    <property type="evidence" value="ECO:0007669"/>
    <property type="project" value="InterPro"/>
</dbReference>
<dbReference type="GO" id="GO:0016740">
    <property type="term" value="F:transferase activity"/>
    <property type="evidence" value="ECO:0007669"/>
    <property type="project" value="InterPro"/>
</dbReference>
<dbReference type="GO" id="GO:0002181">
    <property type="term" value="P:cytoplasmic translation"/>
    <property type="evidence" value="ECO:0007669"/>
    <property type="project" value="TreeGrafter"/>
</dbReference>
<dbReference type="FunFam" id="2.30.30.30:FF:000001">
    <property type="entry name" value="50S ribosomal protein L2"/>
    <property type="match status" value="1"/>
</dbReference>
<dbReference type="FunFam" id="2.40.50.140:FF:000003">
    <property type="entry name" value="50S ribosomal protein L2"/>
    <property type="match status" value="1"/>
</dbReference>
<dbReference type="FunFam" id="4.10.950.10:FF:000001">
    <property type="entry name" value="50S ribosomal protein L2"/>
    <property type="match status" value="1"/>
</dbReference>
<dbReference type="Gene3D" id="2.30.30.30">
    <property type="match status" value="1"/>
</dbReference>
<dbReference type="Gene3D" id="2.40.50.140">
    <property type="entry name" value="Nucleic acid-binding proteins"/>
    <property type="match status" value="1"/>
</dbReference>
<dbReference type="Gene3D" id="4.10.950.10">
    <property type="entry name" value="Ribosomal protein L2, domain 3"/>
    <property type="match status" value="1"/>
</dbReference>
<dbReference type="HAMAP" id="MF_01320_B">
    <property type="entry name" value="Ribosomal_uL2_B"/>
    <property type="match status" value="1"/>
</dbReference>
<dbReference type="InterPro" id="IPR012340">
    <property type="entry name" value="NA-bd_OB-fold"/>
</dbReference>
<dbReference type="InterPro" id="IPR014722">
    <property type="entry name" value="Rib_uL2_dom2"/>
</dbReference>
<dbReference type="InterPro" id="IPR002171">
    <property type="entry name" value="Ribosomal_uL2"/>
</dbReference>
<dbReference type="InterPro" id="IPR005880">
    <property type="entry name" value="Ribosomal_uL2_bac/org-type"/>
</dbReference>
<dbReference type="InterPro" id="IPR022669">
    <property type="entry name" value="Ribosomal_uL2_C"/>
</dbReference>
<dbReference type="InterPro" id="IPR022671">
    <property type="entry name" value="Ribosomal_uL2_CS"/>
</dbReference>
<dbReference type="InterPro" id="IPR014726">
    <property type="entry name" value="Ribosomal_uL2_dom3"/>
</dbReference>
<dbReference type="InterPro" id="IPR022666">
    <property type="entry name" value="Ribosomal_uL2_RNA-bd_dom"/>
</dbReference>
<dbReference type="InterPro" id="IPR008991">
    <property type="entry name" value="Translation_prot_SH3-like_sf"/>
</dbReference>
<dbReference type="NCBIfam" id="TIGR01171">
    <property type="entry name" value="rplB_bact"/>
    <property type="match status" value="1"/>
</dbReference>
<dbReference type="PANTHER" id="PTHR13691:SF5">
    <property type="entry name" value="LARGE RIBOSOMAL SUBUNIT PROTEIN UL2M"/>
    <property type="match status" value="1"/>
</dbReference>
<dbReference type="PANTHER" id="PTHR13691">
    <property type="entry name" value="RIBOSOMAL PROTEIN L2"/>
    <property type="match status" value="1"/>
</dbReference>
<dbReference type="Pfam" id="PF00181">
    <property type="entry name" value="Ribosomal_L2"/>
    <property type="match status" value="1"/>
</dbReference>
<dbReference type="Pfam" id="PF03947">
    <property type="entry name" value="Ribosomal_L2_C"/>
    <property type="match status" value="1"/>
</dbReference>
<dbReference type="PIRSF" id="PIRSF002158">
    <property type="entry name" value="Ribosomal_L2"/>
    <property type="match status" value="1"/>
</dbReference>
<dbReference type="SMART" id="SM01383">
    <property type="entry name" value="Ribosomal_L2"/>
    <property type="match status" value="1"/>
</dbReference>
<dbReference type="SMART" id="SM01382">
    <property type="entry name" value="Ribosomal_L2_C"/>
    <property type="match status" value="1"/>
</dbReference>
<dbReference type="SUPFAM" id="SSF50249">
    <property type="entry name" value="Nucleic acid-binding proteins"/>
    <property type="match status" value="1"/>
</dbReference>
<dbReference type="SUPFAM" id="SSF50104">
    <property type="entry name" value="Translation proteins SH3-like domain"/>
    <property type="match status" value="1"/>
</dbReference>
<dbReference type="PROSITE" id="PS00467">
    <property type="entry name" value="RIBOSOMAL_L2"/>
    <property type="match status" value="1"/>
</dbReference>
<organism>
    <name type="scientific">Pasteurella multocida (strain Pm70)</name>
    <dbReference type="NCBI Taxonomy" id="272843"/>
    <lineage>
        <taxon>Bacteria</taxon>
        <taxon>Pseudomonadati</taxon>
        <taxon>Pseudomonadota</taxon>
        <taxon>Gammaproteobacteria</taxon>
        <taxon>Pasteurellales</taxon>
        <taxon>Pasteurellaceae</taxon>
        <taxon>Pasteurella</taxon>
    </lineage>
</organism>
<name>RL2_PASMU</name>
<feature type="chain" id="PRO_0000129593" description="Large ribosomal subunit protein uL2">
    <location>
        <begin position="1"/>
        <end position="273"/>
    </location>
</feature>
<feature type="region of interest" description="Disordered" evidence="2">
    <location>
        <begin position="30"/>
        <end position="50"/>
    </location>
</feature>
<feature type="region of interest" description="Disordered" evidence="2">
    <location>
        <begin position="221"/>
        <end position="273"/>
    </location>
</feature>
<feature type="compositionally biased region" description="Basic residues" evidence="2">
    <location>
        <begin position="253"/>
        <end position="273"/>
    </location>
</feature>
<gene>
    <name evidence="1" type="primary">rplB</name>
    <name evidence="1" type="synonym">rpl2</name>
    <name type="ordered locus">PM1412</name>
</gene>
<evidence type="ECO:0000255" key="1">
    <source>
        <dbReference type="HAMAP-Rule" id="MF_01320"/>
    </source>
</evidence>
<evidence type="ECO:0000256" key="2">
    <source>
        <dbReference type="SAM" id="MobiDB-lite"/>
    </source>
</evidence>
<evidence type="ECO:0000305" key="3"/>
<reference key="1">
    <citation type="journal article" date="2001" name="Proc. Natl. Acad. Sci. U.S.A.">
        <title>Complete genomic sequence of Pasteurella multocida Pm70.</title>
        <authorList>
            <person name="May B.J."/>
            <person name="Zhang Q."/>
            <person name="Li L.L."/>
            <person name="Paustian M.L."/>
            <person name="Whittam T.S."/>
            <person name="Kapur V."/>
        </authorList>
    </citation>
    <scope>NUCLEOTIDE SEQUENCE [LARGE SCALE GENOMIC DNA]</scope>
    <source>
        <strain>Pm70</strain>
    </source>
</reference>